<dbReference type="EC" id="7.1.1.-" evidence="1"/>
<dbReference type="EMBL" id="CP000240">
    <property type="protein sequence ID" value="ABD01296.1"/>
    <property type="molecule type" value="Genomic_DNA"/>
</dbReference>
<dbReference type="RefSeq" id="WP_011431965.1">
    <property type="nucleotide sequence ID" value="NC_007776.1"/>
</dbReference>
<dbReference type="SMR" id="Q2JPJ1"/>
<dbReference type="STRING" id="321332.CYB_0298"/>
<dbReference type="KEGG" id="cyb:CYB_0298"/>
<dbReference type="eggNOG" id="COG1008">
    <property type="taxonomic scope" value="Bacteria"/>
</dbReference>
<dbReference type="HOGENOM" id="CLU_007100_4_2_3"/>
<dbReference type="OrthoDB" id="9811718at2"/>
<dbReference type="Proteomes" id="UP000001938">
    <property type="component" value="Chromosome"/>
</dbReference>
<dbReference type="GO" id="GO:0031676">
    <property type="term" value="C:plasma membrane-derived thylakoid membrane"/>
    <property type="evidence" value="ECO:0007669"/>
    <property type="project" value="UniProtKB-SubCell"/>
</dbReference>
<dbReference type="GO" id="GO:0008137">
    <property type="term" value="F:NADH dehydrogenase (ubiquinone) activity"/>
    <property type="evidence" value="ECO:0007669"/>
    <property type="project" value="InterPro"/>
</dbReference>
<dbReference type="GO" id="GO:0048039">
    <property type="term" value="F:ubiquinone binding"/>
    <property type="evidence" value="ECO:0007669"/>
    <property type="project" value="TreeGrafter"/>
</dbReference>
<dbReference type="GO" id="GO:0042773">
    <property type="term" value="P:ATP synthesis coupled electron transport"/>
    <property type="evidence" value="ECO:0007669"/>
    <property type="project" value="InterPro"/>
</dbReference>
<dbReference type="GO" id="GO:0015990">
    <property type="term" value="P:electron transport coupled proton transport"/>
    <property type="evidence" value="ECO:0007669"/>
    <property type="project" value="TreeGrafter"/>
</dbReference>
<dbReference type="HAMAP" id="MF_00491">
    <property type="entry name" value="NDH1_NuoM"/>
    <property type="match status" value="1"/>
</dbReference>
<dbReference type="InterPro" id="IPR022997">
    <property type="entry name" value="NADH_Q_OxRdtase_chain4"/>
</dbReference>
<dbReference type="InterPro" id="IPR010227">
    <property type="entry name" value="NADH_Q_OxRdtase_chainM/4"/>
</dbReference>
<dbReference type="InterPro" id="IPR003918">
    <property type="entry name" value="NADH_UbQ_OxRdtase"/>
</dbReference>
<dbReference type="InterPro" id="IPR001750">
    <property type="entry name" value="ND/Mrp_TM"/>
</dbReference>
<dbReference type="NCBIfam" id="TIGR01972">
    <property type="entry name" value="NDH_I_M"/>
    <property type="match status" value="1"/>
</dbReference>
<dbReference type="NCBIfam" id="NF009212">
    <property type="entry name" value="PRK12561.1"/>
    <property type="match status" value="1"/>
</dbReference>
<dbReference type="PANTHER" id="PTHR43507:SF21">
    <property type="entry name" value="NAD(P)H-QUINONE OXIDOREDUCTASE CHAIN 4, CHLOROPLASTIC"/>
    <property type="match status" value="1"/>
</dbReference>
<dbReference type="PANTHER" id="PTHR43507">
    <property type="entry name" value="NADH-UBIQUINONE OXIDOREDUCTASE CHAIN 4"/>
    <property type="match status" value="1"/>
</dbReference>
<dbReference type="Pfam" id="PF00361">
    <property type="entry name" value="Proton_antipo_M"/>
    <property type="match status" value="1"/>
</dbReference>
<dbReference type="PRINTS" id="PR01437">
    <property type="entry name" value="NUOXDRDTASE4"/>
</dbReference>
<evidence type="ECO:0000255" key="1">
    <source>
        <dbReference type="HAMAP-Rule" id="MF_00491"/>
    </source>
</evidence>
<gene>
    <name evidence="1" type="primary">ndhD1</name>
    <name type="ordered locus">CYB_0298</name>
</gene>
<comment type="function">
    <text evidence="1">NDH-1 shuttles electrons from NAD(P)H, via FMN and iron-sulfur (Fe-S) centers, to quinones in the respiratory chain. The immediate electron acceptor for the enzyme in this species is believed to be plastoquinone. Couples the redox reaction to proton translocation (for every two electrons transferred, four hydrogen ions are translocated across the cytoplasmic membrane), and thus conserves the redox energy in a proton gradient.</text>
</comment>
<comment type="catalytic activity">
    <reaction evidence="1">
        <text>a plastoquinone + NADH + (n+1) H(+)(in) = a plastoquinol + NAD(+) + n H(+)(out)</text>
        <dbReference type="Rhea" id="RHEA:42608"/>
        <dbReference type="Rhea" id="RHEA-COMP:9561"/>
        <dbReference type="Rhea" id="RHEA-COMP:9562"/>
        <dbReference type="ChEBI" id="CHEBI:15378"/>
        <dbReference type="ChEBI" id="CHEBI:17757"/>
        <dbReference type="ChEBI" id="CHEBI:57540"/>
        <dbReference type="ChEBI" id="CHEBI:57945"/>
        <dbReference type="ChEBI" id="CHEBI:62192"/>
    </reaction>
</comment>
<comment type="catalytic activity">
    <reaction evidence="1">
        <text>a plastoquinone + NADPH + (n+1) H(+)(in) = a plastoquinol + NADP(+) + n H(+)(out)</text>
        <dbReference type="Rhea" id="RHEA:42612"/>
        <dbReference type="Rhea" id="RHEA-COMP:9561"/>
        <dbReference type="Rhea" id="RHEA-COMP:9562"/>
        <dbReference type="ChEBI" id="CHEBI:15378"/>
        <dbReference type="ChEBI" id="CHEBI:17757"/>
        <dbReference type="ChEBI" id="CHEBI:57783"/>
        <dbReference type="ChEBI" id="CHEBI:58349"/>
        <dbReference type="ChEBI" id="CHEBI:62192"/>
    </reaction>
</comment>
<comment type="subcellular location">
    <subcellularLocation>
        <location evidence="1">Cellular thylakoid membrane</location>
        <topology evidence="1">Multi-pass membrane protein</topology>
    </subcellularLocation>
</comment>
<comment type="similarity">
    <text evidence="1">Belongs to the complex I subunit 4 family.</text>
</comment>
<feature type="chain" id="PRO_0000343256" description="NAD(P)H-quinone oxidoreductase chain 4 1">
    <location>
        <begin position="1"/>
        <end position="528"/>
    </location>
</feature>
<feature type="transmembrane region" description="Helical" evidence="1">
    <location>
        <begin position="7"/>
        <end position="27"/>
    </location>
</feature>
<feature type="transmembrane region" description="Helical" evidence="1">
    <location>
        <begin position="32"/>
        <end position="52"/>
    </location>
</feature>
<feature type="transmembrane region" description="Helical" evidence="1">
    <location>
        <begin position="86"/>
        <end position="106"/>
    </location>
</feature>
<feature type="transmembrane region" description="Helical" evidence="1">
    <location>
        <begin position="114"/>
        <end position="134"/>
    </location>
</feature>
<feature type="transmembrane region" description="Helical" evidence="1">
    <location>
        <begin position="136"/>
        <end position="156"/>
    </location>
</feature>
<feature type="transmembrane region" description="Helical" evidence="1">
    <location>
        <begin position="168"/>
        <end position="188"/>
    </location>
</feature>
<feature type="transmembrane region" description="Helical" evidence="1">
    <location>
        <begin position="208"/>
        <end position="228"/>
    </location>
</feature>
<feature type="transmembrane region" description="Helical" evidence="1">
    <location>
        <begin position="242"/>
        <end position="262"/>
    </location>
</feature>
<feature type="transmembrane region" description="Helical" evidence="1">
    <location>
        <begin position="276"/>
        <end position="296"/>
    </location>
</feature>
<feature type="transmembrane region" description="Helical" evidence="1">
    <location>
        <begin position="310"/>
        <end position="330"/>
    </location>
</feature>
<feature type="transmembrane region" description="Helical" evidence="1">
    <location>
        <begin position="331"/>
        <end position="351"/>
    </location>
</feature>
<feature type="transmembrane region" description="Helical" evidence="1">
    <location>
        <begin position="375"/>
        <end position="395"/>
    </location>
</feature>
<feature type="transmembrane region" description="Helical" evidence="1">
    <location>
        <begin position="417"/>
        <end position="437"/>
    </location>
</feature>
<feature type="transmembrane region" description="Helical" evidence="1">
    <location>
        <begin position="463"/>
        <end position="483"/>
    </location>
</feature>
<reference key="1">
    <citation type="journal article" date="2007" name="ISME J.">
        <title>Population level functional diversity in a microbial community revealed by comparative genomic and metagenomic analyses.</title>
        <authorList>
            <person name="Bhaya D."/>
            <person name="Grossman A.R."/>
            <person name="Steunou A.-S."/>
            <person name="Khuri N."/>
            <person name="Cohan F.M."/>
            <person name="Hamamura N."/>
            <person name="Melendrez M.C."/>
            <person name="Bateson M.M."/>
            <person name="Ward D.M."/>
            <person name="Heidelberg J.F."/>
        </authorList>
    </citation>
    <scope>NUCLEOTIDE SEQUENCE [LARGE SCALE GENOMIC DNA]</scope>
    <source>
        <strain>JA-2-3B'a(2-13)</strain>
    </source>
</reference>
<organism>
    <name type="scientific">Synechococcus sp. (strain JA-2-3B'a(2-13))</name>
    <name type="common">Cyanobacteria bacterium Yellowstone B-Prime</name>
    <dbReference type="NCBI Taxonomy" id="321332"/>
    <lineage>
        <taxon>Bacteria</taxon>
        <taxon>Bacillati</taxon>
        <taxon>Cyanobacteriota</taxon>
        <taxon>Cyanophyceae</taxon>
        <taxon>Synechococcales</taxon>
        <taxon>Synechococcaceae</taxon>
        <taxon>Synechococcus</taxon>
    </lineage>
</organism>
<accession>Q2JPJ1</accession>
<name>NU4C1_SYNJB</name>
<proteinExistence type="inferred from homology"/>
<sequence length="528" mass="57317">MSNPLEFPWLSVLVLLPLLAAFGIPLIPQSRWVRWYALAVGAFDLGLMAYVFARHYDLQDFSLQLAERYAWVPQIGFHWSLAVDGLSLPLVLLSGLITTLSIVAAWNLSHKPRLFFFLLLLMYGAQVGVFLAQDMLLFFLMWEIELVPVYLLISIWGGPKRQYAATKFILYTAAASIFILVGSLAMAFYGEGFSLEMAELSAKSYPLALELLAYAALLIAFGVKLPIFPLHTWLPDAHSEASAPISMILAGVLLKMGGYGLIRMNVGMLSEAHVYFAPVLAVLGVVNIIYGALAAFGQNHLKRRLAYSSIAHMGFVLIGISAFTELGINGAVLQMISHGLIAAVLFFLTGITYERTHTLALDKLGGLAKQMPKAFALFTAGSLASLALPGMSGFVGELTVFLGLTTSDAYAPTFKAGIALLAAVGIILTPIYLLSMLRQVFYGAQDPGLVLEDYLGDVRPREMAVALCLLLPILGIGFYPRLATQTYDVTTVAVAAQLRSVLATEIVQRPFFPSPVQSAQVAALPLED</sequence>
<protein>
    <recommendedName>
        <fullName evidence="1">NAD(P)H-quinone oxidoreductase chain 4 1</fullName>
        <ecNumber evidence="1">7.1.1.-</ecNumber>
    </recommendedName>
    <alternativeName>
        <fullName evidence="1">NAD(P)H dehydrogenase I, chain 4 1</fullName>
    </alternativeName>
    <alternativeName>
        <fullName evidence="1">NDH-1, chain 4 1</fullName>
    </alternativeName>
</protein>
<keyword id="KW-0472">Membrane</keyword>
<keyword id="KW-0520">NAD</keyword>
<keyword id="KW-0521">NADP</keyword>
<keyword id="KW-0618">Plastoquinone</keyword>
<keyword id="KW-0874">Quinone</keyword>
<keyword id="KW-1185">Reference proteome</keyword>
<keyword id="KW-0793">Thylakoid</keyword>
<keyword id="KW-1278">Translocase</keyword>
<keyword id="KW-0812">Transmembrane</keyword>
<keyword id="KW-1133">Transmembrane helix</keyword>